<sequence length="527" mass="59756">MADSRDPASDQMQHWKEQRAAQKADVLTTGAGNPVGDKLNVITVGPRGPLLVQDVVFTDEMAHFDRERIPERVVHAKGAGAFGYFEVTHDITKYSKAKVFEHIGKKTPIAVRFSTVAGESGSADTVRDPRGFAVKFYTEDGNWDLVGNNTPIFFIRDPILFPSFIHSQKRNPQTHLKDPDMVWDFWSLRPESLHQVSFLFSDRGIPDGHRHMNGYGSHTFKLVNANGEAVYCKFHYKTDQGIKNLSVEDAARLSQEDPDYGIRDLFNAIATGKYPSWTFYIQVMTFNQAETFPFNPFDLTKVWPHKDYPLIPVGKLVLNRNPVNYFAEVEQIAFDPSNMPPGIEASPDKMLQGRLFAYPDTHRHRLGPNYLHIPVNCPYRARVANYQRDGPMCMQDNQGGAPNYYPNSFGAPEQQPSALEHSIQYSGEVRRFNTANDDNVTQVRAFYVNVLNEEQRKRLCENIAGHLKDAQIFIQKKAVKNFTEVHPDYGSHIQALLDKYNAEKPKNAIHTFVQSGSHLAAREKANL</sequence>
<feature type="initiator methionine" description="Removed" evidence="5 20">
    <location>
        <position position="1"/>
    </location>
</feature>
<feature type="chain" id="PRO_0000084901" description="Catalase">
    <location>
        <begin position="2"/>
        <end position="527"/>
    </location>
</feature>
<feature type="short sequence motif" description="Microbody targeting signal; atypical" evidence="9">
    <location>
        <begin position="524"/>
        <end position="527"/>
    </location>
</feature>
<feature type="active site" evidence="11">
    <location>
        <position position="75"/>
    </location>
</feature>
<feature type="active site" evidence="11">
    <location>
        <position position="148"/>
    </location>
</feature>
<feature type="binding site" evidence="3 12 13 14 15">
    <location>
        <position position="194"/>
    </location>
    <ligand>
        <name>NADP(+)</name>
        <dbReference type="ChEBI" id="CHEBI:58349"/>
    </ligand>
</feature>
<feature type="binding site" evidence="3 12 13 14 15">
    <location>
        <position position="201"/>
    </location>
    <ligand>
        <name>NADP(+)</name>
        <dbReference type="ChEBI" id="CHEBI:58349"/>
    </ligand>
</feature>
<feature type="binding site" evidence="3 12 13 14 15">
    <location>
        <position position="203"/>
    </location>
    <ligand>
        <name>NADP(+)</name>
        <dbReference type="ChEBI" id="CHEBI:58349"/>
    </ligand>
</feature>
<feature type="binding site" evidence="3 12 13 14 15">
    <location>
        <position position="213"/>
    </location>
    <ligand>
        <name>NADP(+)</name>
        <dbReference type="ChEBI" id="CHEBI:58349"/>
    </ligand>
</feature>
<feature type="binding site" evidence="3 12 13 15">
    <location>
        <position position="237"/>
    </location>
    <ligand>
        <name>NADP(+)</name>
        <dbReference type="ChEBI" id="CHEBI:58349"/>
    </ligand>
</feature>
<feature type="binding site" evidence="3 12 13 14 15">
    <location>
        <position position="303"/>
    </location>
    <ligand>
        <name>NADP(+)</name>
        <dbReference type="ChEBI" id="CHEBI:58349"/>
    </ligand>
</feature>
<feature type="binding site" evidence="3 12 13 14 15">
    <location>
        <position position="305"/>
    </location>
    <ligand>
        <name>NADP(+)</name>
        <dbReference type="ChEBI" id="CHEBI:58349"/>
    </ligand>
</feature>
<feature type="binding site" evidence="3 13">
    <location>
        <position position="306"/>
    </location>
    <ligand>
        <name>NADP(+)</name>
        <dbReference type="ChEBI" id="CHEBI:58349"/>
    </ligand>
</feature>
<feature type="binding site" description="axial binding residue" evidence="3 4 12 13 14 15 16 17">
    <location>
        <position position="358"/>
    </location>
    <ligand>
        <name>heme</name>
        <dbReference type="ChEBI" id="CHEBI:30413"/>
    </ligand>
    <ligandPart>
        <name>Fe</name>
        <dbReference type="ChEBI" id="CHEBI:18248"/>
    </ligandPart>
</feature>
<feature type="modified residue" description="N-acetylalanine" evidence="20">
    <location>
        <position position="2"/>
    </location>
</feature>
<feature type="modified residue" description="Phosphoserine" evidence="19">
    <location>
        <position position="9"/>
    </location>
</feature>
<feature type="modified residue" description="N6-succinyllysine" evidence="1">
    <location>
        <position position="221"/>
    </location>
</feature>
<feature type="modified residue" description="N6-acetyllysine" evidence="1">
    <location>
        <position position="233"/>
    </location>
</feature>
<feature type="modified residue" description="N6-acetyllysine; alternate" evidence="1">
    <location>
        <position position="306"/>
    </location>
</feature>
<feature type="modified residue" description="N6-succinyllysine; alternate" evidence="1">
    <location>
        <position position="306"/>
    </location>
</feature>
<feature type="modified residue" description="Phosphoserine" evidence="1">
    <location>
        <position position="417"/>
    </location>
</feature>
<feature type="modified residue" description="Phosphoserine" evidence="19">
    <location>
        <position position="422"/>
    </location>
</feature>
<feature type="modified residue" description="N6-acetyllysine; alternate" evidence="1">
    <location>
        <position position="480"/>
    </location>
</feature>
<feature type="modified residue" description="N6-succinyllysine; alternate" evidence="1">
    <location>
        <position position="480"/>
    </location>
</feature>
<feature type="modified residue" description="N6-acetyllysine" evidence="1">
    <location>
        <position position="499"/>
    </location>
</feature>
<feature type="modified residue" description="Phosphothreonine" evidence="19">
    <location>
        <position position="511"/>
    </location>
</feature>
<feature type="modified residue" description="Phosphoserine" evidence="18 19">
    <location>
        <position position="515"/>
    </location>
</feature>
<feature type="modified residue" description="Phosphoserine" evidence="19">
    <location>
        <position position="517"/>
    </location>
</feature>
<feature type="mutagenesis site" description="Does not affect localization to peroxisomes." evidence="9">
    <original>SHL</original>
    <variation>TQV</variation>
    <location>
        <begin position="517"/>
        <end position="519"/>
    </location>
</feature>
<feature type="mutagenesis site" description="Abolished localization to peroxisomes." evidence="9">
    <location>
        <begin position="524"/>
        <end position="527"/>
    </location>
</feature>
<feature type="mutagenesis site" description="Abolished localization to peroxisomes." evidence="9">
    <original>N</original>
    <variation>D</variation>
    <location>
        <position position="526"/>
    </location>
</feature>
<feature type="sequence conflict" description="In Ref. 3; AAK29181." evidence="10" ref="3">
    <original>D</original>
    <variation>N</variation>
    <location>
        <position position="54"/>
    </location>
</feature>
<feature type="sequence conflict" description="In Ref. 4; BAG37746." evidence="10" ref="4">
    <original>F</original>
    <variation>L</variation>
    <location>
        <position position="100"/>
    </location>
</feature>
<feature type="sequence conflict" description="In Ref. 3; AAK29181." evidence="10" ref="3">
    <original>D</original>
    <variation>G</variation>
    <location>
        <position position="239"/>
    </location>
</feature>
<feature type="sequence conflict" description="In Ref. 3; AAK29181." evidence="10" ref="3">
    <original>Y</original>
    <variation>D</variation>
    <location>
        <position position="274"/>
    </location>
</feature>
<feature type="sequence conflict" description="In Ref. 3; AAK29181." evidence="10" ref="3">
    <original>K</original>
    <variation>R</variation>
    <location>
        <position position="301"/>
    </location>
</feature>
<feature type="sequence conflict" description="In Ref. 4; BAG37746." evidence="10" ref="4">
    <original>L</original>
    <variation>P</variation>
    <location>
        <position position="366"/>
    </location>
</feature>
<feature type="sequence conflict" description="In Ref. 4; BAG37746." evidence="10" ref="4">
    <original>N</original>
    <variation>D</variation>
    <location>
        <position position="449"/>
    </location>
</feature>
<feature type="sequence conflict" description="In Ref. 3; AAK29181." evidence="10" ref="3">
    <original>Q</original>
    <variation>R</variation>
    <location>
        <position position="514"/>
    </location>
</feature>
<feature type="sequence conflict" description="In Ref. 3; AAK29181." evidence="10" ref="3">
    <original>A</original>
    <variation>V</variation>
    <location>
        <position position="520"/>
    </location>
</feature>
<feature type="turn" evidence="21">
    <location>
        <begin position="7"/>
        <end position="10"/>
    </location>
</feature>
<feature type="helix" evidence="21">
    <location>
        <begin position="11"/>
        <end position="18"/>
    </location>
</feature>
<feature type="turn" evidence="21">
    <location>
        <begin position="19"/>
        <end position="21"/>
    </location>
</feature>
<feature type="strand" evidence="23">
    <location>
        <begin position="30"/>
        <end position="32"/>
    </location>
</feature>
<feature type="strand" evidence="21">
    <location>
        <begin position="38"/>
        <end position="40"/>
    </location>
</feature>
<feature type="strand" evidence="21">
    <location>
        <begin position="42"/>
        <end position="45"/>
    </location>
</feature>
<feature type="helix" evidence="21">
    <location>
        <begin position="55"/>
        <end position="64"/>
    </location>
</feature>
<feature type="strand" evidence="22">
    <location>
        <begin position="73"/>
        <end position="75"/>
    </location>
</feature>
<feature type="strand" evidence="21">
    <location>
        <begin position="77"/>
        <end position="87"/>
    </location>
</feature>
<feature type="turn" evidence="21">
    <location>
        <begin position="92"/>
        <end position="94"/>
    </location>
</feature>
<feature type="helix" evidence="21">
    <location>
        <begin position="98"/>
        <end position="100"/>
    </location>
</feature>
<feature type="strand" evidence="21">
    <location>
        <begin position="106"/>
        <end position="114"/>
    </location>
</feature>
<feature type="strand" evidence="21">
    <location>
        <begin position="116"/>
        <end position="118"/>
    </location>
</feature>
<feature type="strand" evidence="21">
    <location>
        <begin position="124"/>
        <end position="128"/>
    </location>
</feature>
<feature type="strand" evidence="21">
    <location>
        <begin position="131"/>
        <end position="138"/>
    </location>
</feature>
<feature type="strand" evidence="21">
    <location>
        <begin position="141"/>
        <end position="152"/>
    </location>
</feature>
<feature type="helix" evidence="21">
    <location>
        <begin position="158"/>
        <end position="160"/>
    </location>
</feature>
<feature type="helix" evidence="21">
    <location>
        <begin position="161"/>
        <end position="168"/>
    </location>
</feature>
<feature type="turn" evidence="21">
    <location>
        <begin position="172"/>
        <end position="174"/>
    </location>
</feature>
<feature type="helix" evidence="21">
    <location>
        <begin position="179"/>
        <end position="188"/>
    </location>
</feature>
<feature type="helix" evidence="21">
    <location>
        <begin position="190"/>
        <end position="192"/>
    </location>
</feature>
<feature type="helix" evidence="21">
    <location>
        <begin position="193"/>
        <end position="199"/>
    </location>
</feature>
<feature type="helix" evidence="21">
    <location>
        <begin position="202"/>
        <end position="204"/>
    </location>
</feature>
<feature type="strand" evidence="21">
    <location>
        <begin position="205"/>
        <end position="209"/>
    </location>
</feature>
<feature type="strand" evidence="21">
    <location>
        <begin position="220"/>
        <end position="223"/>
    </location>
</feature>
<feature type="strand" evidence="21">
    <location>
        <begin position="229"/>
        <end position="238"/>
    </location>
</feature>
<feature type="helix" evidence="21">
    <location>
        <begin position="247"/>
        <end position="256"/>
    </location>
</feature>
<feature type="helix" evidence="21">
    <location>
        <begin position="260"/>
        <end position="270"/>
    </location>
</feature>
<feature type="strand" evidence="21">
    <location>
        <begin position="276"/>
        <end position="284"/>
    </location>
</feature>
<feature type="helix" evidence="21">
    <location>
        <begin position="286"/>
        <end position="291"/>
    </location>
</feature>
<feature type="turn" evidence="21">
    <location>
        <begin position="305"/>
        <end position="307"/>
    </location>
</feature>
<feature type="strand" evidence="21">
    <location>
        <begin position="311"/>
        <end position="320"/>
    </location>
</feature>
<feature type="helix" evidence="21">
    <location>
        <begin position="325"/>
        <end position="328"/>
    </location>
</feature>
<feature type="turn" evidence="21">
    <location>
        <begin position="329"/>
        <end position="331"/>
    </location>
</feature>
<feature type="strand" evidence="21">
    <location>
        <begin position="343"/>
        <end position="345"/>
    </location>
</feature>
<feature type="helix" evidence="21">
    <location>
        <begin position="349"/>
        <end position="365"/>
    </location>
</feature>
<feature type="helix" evidence="21">
    <location>
        <begin position="370"/>
        <end position="372"/>
    </location>
</feature>
<feature type="helix" evidence="21">
    <location>
        <begin position="374"/>
        <end position="376"/>
    </location>
</feature>
<feature type="turn" evidence="21">
    <location>
        <begin position="397"/>
        <end position="400"/>
    </location>
</feature>
<feature type="strand" evidence="21">
    <location>
        <begin position="404"/>
        <end position="406"/>
    </location>
</feature>
<feature type="helix" evidence="21">
    <location>
        <begin position="416"/>
        <end position="418"/>
    </location>
</feature>
<feature type="strand" evidence="24">
    <location>
        <begin position="423"/>
        <end position="425"/>
    </location>
</feature>
<feature type="strand" evidence="21">
    <location>
        <begin position="427"/>
        <end position="431"/>
    </location>
</feature>
<feature type="strand" evidence="24">
    <location>
        <begin position="435"/>
        <end position="437"/>
    </location>
</feature>
<feature type="helix" evidence="21">
    <location>
        <begin position="441"/>
        <end position="449"/>
    </location>
</feature>
<feature type="helix" evidence="21">
    <location>
        <begin position="453"/>
        <end position="467"/>
    </location>
</feature>
<feature type="helix" evidence="21">
    <location>
        <begin position="472"/>
        <end position="485"/>
    </location>
</feature>
<feature type="helix" evidence="21">
    <location>
        <begin position="487"/>
        <end position="500"/>
    </location>
</feature>
<proteinExistence type="evidence at protein level"/>
<dbReference type="EC" id="1.11.1.6" evidence="8"/>
<dbReference type="EMBL" id="X04085">
    <property type="protein sequence ID" value="CAA27721.1"/>
    <property type="molecule type" value="Genomic_DNA"/>
</dbReference>
<dbReference type="EMBL" id="X04086">
    <property type="protein sequence ID" value="CAA27721.1"/>
    <property type="status" value="JOINED"/>
    <property type="molecule type" value="Genomic_DNA"/>
</dbReference>
<dbReference type="EMBL" id="X04087">
    <property type="protein sequence ID" value="CAA27721.1"/>
    <property type="status" value="JOINED"/>
    <property type="molecule type" value="Genomic_DNA"/>
</dbReference>
<dbReference type="EMBL" id="X04088">
    <property type="protein sequence ID" value="CAA27721.1"/>
    <property type="status" value="JOINED"/>
    <property type="molecule type" value="Genomic_DNA"/>
</dbReference>
<dbReference type="EMBL" id="X04089">
    <property type="protein sequence ID" value="CAA27721.1"/>
    <property type="status" value="JOINED"/>
    <property type="molecule type" value="Genomic_DNA"/>
</dbReference>
<dbReference type="EMBL" id="X04090">
    <property type="protein sequence ID" value="CAA27721.1"/>
    <property type="status" value="JOINED"/>
    <property type="molecule type" value="Genomic_DNA"/>
</dbReference>
<dbReference type="EMBL" id="X04091">
    <property type="protein sequence ID" value="CAA27721.1"/>
    <property type="status" value="JOINED"/>
    <property type="molecule type" value="Genomic_DNA"/>
</dbReference>
<dbReference type="EMBL" id="X04092">
    <property type="protein sequence ID" value="CAA27721.1"/>
    <property type="status" value="JOINED"/>
    <property type="molecule type" value="Genomic_DNA"/>
</dbReference>
<dbReference type="EMBL" id="X04093">
    <property type="protein sequence ID" value="CAA27721.1"/>
    <property type="status" value="JOINED"/>
    <property type="molecule type" value="Genomic_DNA"/>
</dbReference>
<dbReference type="EMBL" id="X04094">
    <property type="protein sequence ID" value="CAA27721.1"/>
    <property type="status" value="JOINED"/>
    <property type="molecule type" value="Genomic_DNA"/>
</dbReference>
<dbReference type="EMBL" id="X04095">
    <property type="protein sequence ID" value="CAA27721.1"/>
    <property type="status" value="JOINED"/>
    <property type="molecule type" value="Genomic_DNA"/>
</dbReference>
<dbReference type="EMBL" id="X04096">
    <property type="protein sequence ID" value="CAA27721.1"/>
    <property type="status" value="JOINED"/>
    <property type="molecule type" value="Genomic_DNA"/>
</dbReference>
<dbReference type="EMBL" id="X04076">
    <property type="protein sequence ID" value="CAA27717.1"/>
    <property type="molecule type" value="mRNA"/>
</dbReference>
<dbReference type="EMBL" id="AY028632">
    <property type="protein sequence ID" value="AAK29181.1"/>
    <property type="molecule type" value="mRNA"/>
</dbReference>
<dbReference type="EMBL" id="AK291585">
    <property type="protein sequence ID" value="BAF84274.1"/>
    <property type="molecule type" value="mRNA"/>
</dbReference>
<dbReference type="EMBL" id="AK315350">
    <property type="protein sequence ID" value="BAG37746.1"/>
    <property type="molecule type" value="mRNA"/>
</dbReference>
<dbReference type="EMBL" id="AY545477">
    <property type="protein sequence ID" value="AAS37679.1"/>
    <property type="molecule type" value="Genomic_DNA"/>
</dbReference>
<dbReference type="EMBL" id="AL035079">
    <property type="status" value="NOT_ANNOTATED_CDS"/>
    <property type="molecule type" value="Genomic_DNA"/>
</dbReference>
<dbReference type="EMBL" id="CH471064">
    <property type="protein sequence ID" value="EAW68170.1"/>
    <property type="molecule type" value="Genomic_DNA"/>
</dbReference>
<dbReference type="EMBL" id="CH471064">
    <property type="protein sequence ID" value="EAW68171.1"/>
    <property type="molecule type" value="Genomic_DNA"/>
</dbReference>
<dbReference type="EMBL" id="BC110398">
    <property type="protein sequence ID" value="AAI10399.1"/>
    <property type="molecule type" value="mRNA"/>
</dbReference>
<dbReference type="EMBL" id="BC112217">
    <property type="protein sequence ID" value="AAI12218.1"/>
    <property type="molecule type" value="mRNA"/>
</dbReference>
<dbReference type="EMBL" id="BC112219">
    <property type="protein sequence ID" value="AAI12220.1"/>
    <property type="molecule type" value="mRNA"/>
</dbReference>
<dbReference type="EMBL" id="L13609">
    <property type="protein sequence ID" value="AAA16651.1"/>
    <property type="molecule type" value="Genomic_DNA"/>
</dbReference>
<dbReference type="EMBL" id="K02400">
    <property type="protein sequence ID" value="AAB59522.1"/>
    <property type="molecule type" value="Genomic_DNA"/>
</dbReference>
<dbReference type="CCDS" id="CCDS7891.1"/>
<dbReference type="PIR" id="A23646">
    <property type="entry name" value="CSHU"/>
</dbReference>
<dbReference type="RefSeq" id="NP_001743.1">
    <property type="nucleotide sequence ID" value="NM_001752.4"/>
</dbReference>
<dbReference type="PDB" id="1DGB">
    <property type="method" value="X-ray"/>
    <property type="resolution" value="2.20 A"/>
    <property type="chains" value="A/B/C/D=4-501"/>
</dbReference>
<dbReference type="PDB" id="1DGF">
    <property type="method" value="X-ray"/>
    <property type="resolution" value="1.50 A"/>
    <property type="chains" value="A/B/C/D=5-501"/>
</dbReference>
<dbReference type="PDB" id="1DGG">
    <property type="method" value="X-ray"/>
    <property type="resolution" value="1.80 A"/>
    <property type="chains" value="A/B/C/D=5-501"/>
</dbReference>
<dbReference type="PDB" id="1DGH">
    <property type="method" value="X-ray"/>
    <property type="resolution" value="2.00 A"/>
    <property type="chains" value="A/B/C/D=4-501"/>
</dbReference>
<dbReference type="PDB" id="1F4J">
    <property type="method" value="X-ray"/>
    <property type="resolution" value="2.40 A"/>
    <property type="chains" value="A/B/C/D=1-527"/>
</dbReference>
<dbReference type="PDB" id="1QQW">
    <property type="method" value="X-ray"/>
    <property type="resolution" value="2.75 A"/>
    <property type="chains" value="A/B/C/D=1-527"/>
</dbReference>
<dbReference type="PDB" id="7P8W">
    <property type="method" value="EM"/>
    <property type="resolution" value="2.20 A"/>
    <property type="chains" value="A/B/C/D=1-527"/>
</dbReference>
<dbReference type="PDB" id="7VD9">
    <property type="method" value="EM"/>
    <property type="resolution" value="2.29 A"/>
    <property type="chains" value="A/B/C/D=1-527"/>
</dbReference>
<dbReference type="PDB" id="8EL9">
    <property type="method" value="EM"/>
    <property type="resolution" value="2.27 A"/>
    <property type="chains" value="A/B/C/D=1-527"/>
</dbReference>
<dbReference type="PDB" id="8HID">
    <property type="method" value="X-ray"/>
    <property type="resolution" value="2.20 A"/>
    <property type="chains" value="A/B/C/D=1-527"/>
</dbReference>
<dbReference type="PDB" id="8PVD">
    <property type="method" value="EM"/>
    <property type="resolution" value="3.40 A"/>
    <property type="chains" value="A=1-527"/>
</dbReference>
<dbReference type="PDB" id="8SGV">
    <property type="method" value="EM"/>
    <property type="resolution" value="2.58 A"/>
    <property type="chains" value="A/B/C/D=1-527"/>
</dbReference>
<dbReference type="PDB" id="8WZH">
    <property type="method" value="EM"/>
    <property type="resolution" value="3.70 A"/>
    <property type="chains" value="A/B/C/D=1-527"/>
</dbReference>
<dbReference type="PDB" id="8WZJ">
    <property type="method" value="EM"/>
    <property type="resolution" value="2.70 A"/>
    <property type="chains" value="A/B/C/D=1-527"/>
</dbReference>
<dbReference type="PDB" id="8WZK">
    <property type="method" value="EM"/>
    <property type="resolution" value="2.40 A"/>
    <property type="chains" value="A/B/C/D=1-527"/>
</dbReference>
<dbReference type="PDB" id="8WZM">
    <property type="method" value="EM"/>
    <property type="resolution" value="2.70 A"/>
    <property type="chains" value="A/B/C/D=1-527"/>
</dbReference>
<dbReference type="PDBsum" id="1DGB"/>
<dbReference type="PDBsum" id="1DGF"/>
<dbReference type="PDBsum" id="1DGG"/>
<dbReference type="PDBsum" id="1DGH"/>
<dbReference type="PDBsum" id="1F4J"/>
<dbReference type="PDBsum" id="1QQW"/>
<dbReference type="PDBsum" id="7P8W"/>
<dbReference type="PDBsum" id="7VD9"/>
<dbReference type="PDBsum" id="8EL9"/>
<dbReference type="PDBsum" id="8HID"/>
<dbReference type="PDBsum" id="8PVD"/>
<dbReference type="PDBsum" id="8SGV"/>
<dbReference type="PDBsum" id="8WZH"/>
<dbReference type="PDBsum" id="8WZJ"/>
<dbReference type="PDBsum" id="8WZK"/>
<dbReference type="PDBsum" id="8WZM"/>
<dbReference type="EMDB" id="EMD-13256"/>
<dbReference type="EMDB" id="EMD-17962"/>
<dbReference type="EMDB" id="EMD-28225"/>
<dbReference type="EMDB" id="EMD-31911"/>
<dbReference type="EMDB" id="EMD-37952"/>
<dbReference type="EMDB" id="EMD-37954"/>
<dbReference type="EMDB" id="EMD-37955"/>
<dbReference type="EMDB" id="EMD-37956"/>
<dbReference type="EMDB" id="EMD-40469"/>
<dbReference type="PCDDB" id="P04040"/>
<dbReference type="SMR" id="P04040"/>
<dbReference type="BioGRID" id="107297">
    <property type="interactions" value="172"/>
</dbReference>
<dbReference type="ComplexPortal" id="CPX-4742">
    <property type="entry name" value="Catalase complex"/>
</dbReference>
<dbReference type="ELM" id="P04040"/>
<dbReference type="FunCoup" id="P04040">
    <property type="interactions" value="1034"/>
</dbReference>
<dbReference type="IntAct" id="P04040">
    <property type="interactions" value="104"/>
</dbReference>
<dbReference type="MINT" id="P04040"/>
<dbReference type="STRING" id="9606.ENSP00000241052"/>
<dbReference type="BindingDB" id="P04040"/>
<dbReference type="ChEMBL" id="CHEMBL3627594"/>
<dbReference type="DrugBank" id="DB09096">
    <property type="generic name" value="Benzoyl peroxide"/>
</dbReference>
<dbReference type="DrugBank" id="DB09116">
    <property type="generic name" value="Calcium carbimide"/>
</dbReference>
<dbReference type="DrugBank" id="DB09061">
    <property type="generic name" value="Cannabidiol"/>
</dbReference>
<dbReference type="DrugBank" id="DB01213">
    <property type="generic name" value="Fomepizole"/>
</dbReference>
<dbReference type="DrugBank" id="DB11091">
    <property type="generic name" value="Hydrogen peroxide"/>
</dbReference>
<dbReference type="DrugBank" id="DB14009">
    <property type="generic name" value="Medical Cannabis"/>
</dbReference>
<dbReference type="DrugBank" id="DB14011">
    <property type="generic name" value="Nabiximols"/>
</dbReference>
<dbReference type="PeroxiBase" id="5282">
    <property type="entry name" value="HsKat01"/>
</dbReference>
<dbReference type="GlyConnect" id="1925">
    <property type="glycosylation" value="16 N-Linked glycans (3 sites), 1 O-GlcNAc glycan (2 sites)"/>
</dbReference>
<dbReference type="GlyCosmos" id="P04040">
    <property type="glycosylation" value="5 sites, 17 glycans"/>
</dbReference>
<dbReference type="GlyGen" id="P04040">
    <property type="glycosylation" value="6 sites, 16 N-linked glycans (3 sites), 1 O-linked glycan (3 sites)"/>
</dbReference>
<dbReference type="iPTMnet" id="P04040"/>
<dbReference type="PhosphoSitePlus" id="P04040"/>
<dbReference type="SwissPalm" id="P04040"/>
<dbReference type="BioMuta" id="CAT"/>
<dbReference type="DMDM" id="115702"/>
<dbReference type="OGP" id="P04040"/>
<dbReference type="REPRODUCTION-2DPAGE" id="IPI00465436"/>
<dbReference type="REPRODUCTION-2DPAGE" id="P04040"/>
<dbReference type="CPTAC" id="CPTAC-472"/>
<dbReference type="CPTAC" id="CPTAC-473"/>
<dbReference type="jPOST" id="P04040"/>
<dbReference type="MassIVE" id="P04040"/>
<dbReference type="PaxDb" id="9606-ENSP00000241052"/>
<dbReference type="PeptideAtlas" id="P04040"/>
<dbReference type="ProteomicsDB" id="51636"/>
<dbReference type="ABCD" id="P04040">
    <property type="antibodies" value="4 sequenced antibodies"/>
</dbReference>
<dbReference type="Antibodypedia" id="3595">
    <property type="antibodies" value="998 antibodies from 47 providers"/>
</dbReference>
<dbReference type="DNASU" id="847"/>
<dbReference type="Ensembl" id="ENST00000241052.5">
    <property type="protein sequence ID" value="ENSP00000241052.4"/>
    <property type="gene ID" value="ENSG00000121691.7"/>
</dbReference>
<dbReference type="GeneID" id="847"/>
<dbReference type="KEGG" id="hsa:847"/>
<dbReference type="MANE-Select" id="ENST00000241052.5">
    <property type="protein sequence ID" value="ENSP00000241052.4"/>
    <property type="RefSeq nucleotide sequence ID" value="NM_001752.4"/>
    <property type="RefSeq protein sequence ID" value="NP_001743.1"/>
</dbReference>
<dbReference type="UCSC" id="uc001mvm.4">
    <property type="organism name" value="human"/>
</dbReference>
<dbReference type="AGR" id="HGNC:1516"/>
<dbReference type="CTD" id="847"/>
<dbReference type="DisGeNET" id="847"/>
<dbReference type="GeneCards" id="CAT"/>
<dbReference type="HGNC" id="HGNC:1516">
    <property type="gene designation" value="CAT"/>
</dbReference>
<dbReference type="HPA" id="ENSG00000121691">
    <property type="expression patterns" value="Tissue enhanced (liver)"/>
</dbReference>
<dbReference type="MalaCards" id="CAT"/>
<dbReference type="MIM" id="115500">
    <property type="type" value="gene"/>
</dbReference>
<dbReference type="MIM" id="614097">
    <property type="type" value="phenotype"/>
</dbReference>
<dbReference type="neXtProt" id="NX_P04040"/>
<dbReference type="OpenTargets" id="ENSG00000121691"/>
<dbReference type="Orphanet" id="926">
    <property type="disease" value="Acatalasemia"/>
</dbReference>
<dbReference type="PharmGKB" id="PA26099"/>
<dbReference type="VEuPathDB" id="HostDB:ENSG00000121691"/>
<dbReference type="eggNOG" id="KOG0047">
    <property type="taxonomic scope" value="Eukaryota"/>
</dbReference>
<dbReference type="GeneTree" id="ENSGT00390000018100"/>
<dbReference type="HOGENOM" id="CLU_010645_2_0_1"/>
<dbReference type="InParanoid" id="P04040"/>
<dbReference type="OMA" id="KFRWNVF"/>
<dbReference type="OrthoDB" id="6880011at2759"/>
<dbReference type="PAN-GO" id="P04040">
    <property type="GO annotations" value="7 GO annotations based on evolutionary models"/>
</dbReference>
<dbReference type="PhylomeDB" id="P04040"/>
<dbReference type="TreeFam" id="TF300540"/>
<dbReference type="BioCyc" id="MetaCyc:MONOMER66-341"/>
<dbReference type="BRENDA" id="1.11.1.6">
    <property type="organism ID" value="2681"/>
</dbReference>
<dbReference type="PathwayCommons" id="P04040"/>
<dbReference type="Reactome" id="R-HSA-3299685">
    <property type="pathway name" value="Detoxification of Reactive Oxygen Species"/>
</dbReference>
<dbReference type="Reactome" id="R-HSA-6798695">
    <property type="pathway name" value="Neutrophil degranulation"/>
</dbReference>
<dbReference type="Reactome" id="R-HSA-9033241">
    <property type="pathway name" value="Peroxisomal protein import"/>
</dbReference>
<dbReference type="Reactome" id="R-HSA-9615017">
    <property type="pathway name" value="FOXO-mediated transcription of oxidative stress, metabolic and neuronal genes"/>
</dbReference>
<dbReference type="Reactome" id="R-HSA-9841251">
    <property type="pathway name" value="Mitochondrial unfolded protein response (UPRmt)"/>
</dbReference>
<dbReference type="SABIO-RK" id="P04040"/>
<dbReference type="SignaLink" id="P04040"/>
<dbReference type="SIGNOR" id="P04040"/>
<dbReference type="BioGRID-ORCS" id="847">
    <property type="hits" value="11 hits in 1173 CRISPR screens"/>
</dbReference>
<dbReference type="CD-CODE" id="232F8A39">
    <property type="entry name" value="P-body"/>
</dbReference>
<dbReference type="ChiTaRS" id="CAT">
    <property type="organism name" value="human"/>
</dbReference>
<dbReference type="EvolutionaryTrace" id="P04040"/>
<dbReference type="GeneWiki" id="Catalase"/>
<dbReference type="GenomeRNAi" id="847"/>
<dbReference type="Pharos" id="P04040">
    <property type="development level" value="Tbio"/>
</dbReference>
<dbReference type="PRO" id="PR:P04040"/>
<dbReference type="Proteomes" id="UP000005640">
    <property type="component" value="Chromosome 11"/>
</dbReference>
<dbReference type="RNAct" id="P04040">
    <property type="molecule type" value="protein"/>
</dbReference>
<dbReference type="Bgee" id="ENSG00000121691">
    <property type="expression patterns" value="Expressed in trabecular bone tissue and 211 other cell types or tissues"/>
</dbReference>
<dbReference type="ExpressionAtlas" id="P04040">
    <property type="expression patterns" value="baseline and differential"/>
</dbReference>
<dbReference type="GO" id="GO:0062151">
    <property type="term" value="C:catalase complex"/>
    <property type="evidence" value="ECO:0000353"/>
    <property type="project" value="ComplexPortal"/>
</dbReference>
<dbReference type="GO" id="GO:0005737">
    <property type="term" value="C:cytoplasm"/>
    <property type="evidence" value="ECO:0000318"/>
    <property type="project" value="GO_Central"/>
</dbReference>
<dbReference type="GO" id="GO:0005829">
    <property type="term" value="C:cytosol"/>
    <property type="evidence" value="ECO:0000304"/>
    <property type="project" value="Reactome"/>
</dbReference>
<dbReference type="GO" id="GO:0070062">
    <property type="term" value="C:extracellular exosome"/>
    <property type="evidence" value="ECO:0007005"/>
    <property type="project" value="UniProtKB"/>
</dbReference>
<dbReference type="GO" id="GO:0005576">
    <property type="term" value="C:extracellular region"/>
    <property type="evidence" value="ECO:0000304"/>
    <property type="project" value="Reactome"/>
</dbReference>
<dbReference type="GO" id="GO:1904813">
    <property type="term" value="C:ficolin-1-rich granule lumen"/>
    <property type="evidence" value="ECO:0000304"/>
    <property type="project" value="Reactome"/>
</dbReference>
<dbReference type="GO" id="GO:0005925">
    <property type="term" value="C:focal adhesion"/>
    <property type="evidence" value="ECO:0007005"/>
    <property type="project" value="UniProtKB"/>
</dbReference>
<dbReference type="GO" id="GO:0043231">
    <property type="term" value="C:intracellular membrane-bounded organelle"/>
    <property type="evidence" value="ECO:0000314"/>
    <property type="project" value="HPA"/>
</dbReference>
<dbReference type="GO" id="GO:0016020">
    <property type="term" value="C:membrane"/>
    <property type="evidence" value="ECO:0007005"/>
    <property type="project" value="UniProtKB"/>
</dbReference>
<dbReference type="GO" id="GO:0005739">
    <property type="term" value="C:mitochondrion"/>
    <property type="evidence" value="ECO:0000318"/>
    <property type="project" value="GO_Central"/>
</dbReference>
<dbReference type="GO" id="GO:0005782">
    <property type="term" value="C:peroxisomal matrix"/>
    <property type="evidence" value="ECO:0000304"/>
    <property type="project" value="Reactome"/>
</dbReference>
<dbReference type="GO" id="GO:0005778">
    <property type="term" value="C:peroxisomal membrane"/>
    <property type="evidence" value="ECO:0000250"/>
    <property type="project" value="UniProtKB"/>
</dbReference>
<dbReference type="GO" id="GO:0005777">
    <property type="term" value="C:peroxisome"/>
    <property type="evidence" value="ECO:0000314"/>
    <property type="project" value="UniProtKB"/>
</dbReference>
<dbReference type="GO" id="GO:0032991">
    <property type="term" value="C:protein-containing complex"/>
    <property type="evidence" value="ECO:0000353"/>
    <property type="project" value="UniProtKB"/>
</dbReference>
<dbReference type="GO" id="GO:0034774">
    <property type="term" value="C:secretory granule lumen"/>
    <property type="evidence" value="ECO:0000304"/>
    <property type="project" value="Reactome"/>
</dbReference>
<dbReference type="GO" id="GO:0004046">
    <property type="term" value="F:aminoacylase activity"/>
    <property type="evidence" value="ECO:0007669"/>
    <property type="project" value="Ensembl"/>
</dbReference>
<dbReference type="GO" id="GO:0016209">
    <property type="term" value="F:antioxidant activity"/>
    <property type="evidence" value="ECO:0000314"/>
    <property type="project" value="UniProtKB"/>
</dbReference>
<dbReference type="GO" id="GO:0004096">
    <property type="term" value="F:catalase activity"/>
    <property type="evidence" value="ECO:0000314"/>
    <property type="project" value="UniProtKB"/>
</dbReference>
<dbReference type="GO" id="GO:0019899">
    <property type="term" value="F:enzyme binding"/>
    <property type="evidence" value="ECO:0000353"/>
    <property type="project" value="UniProtKB"/>
</dbReference>
<dbReference type="GO" id="GO:0020037">
    <property type="term" value="F:heme binding"/>
    <property type="evidence" value="ECO:0000314"/>
    <property type="project" value="UniProtKB"/>
</dbReference>
<dbReference type="GO" id="GO:0042802">
    <property type="term" value="F:identical protein binding"/>
    <property type="evidence" value="ECO:0000353"/>
    <property type="project" value="UniProtKB"/>
</dbReference>
<dbReference type="GO" id="GO:0046872">
    <property type="term" value="F:metal ion binding"/>
    <property type="evidence" value="ECO:0007669"/>
    <property type="project" value="UniProtKB-KW"/>
</dbReference>
<dbReference type="GO" id="GO:0050661">
    <property type="term" value="F:NADP binding"/>
    <property type="evidence" value="ECO:0000314"/>
    <property type="project" value="UniProtKB"/>
</dbReference>
<dbReference type="GO" id="GO:0016684">
    <property type="term" value="F:oxidoreductase activity, acting on peroxide as acceptor"/>
    <property type="evidence" value="ECO:0000250"/>
    <property type="project" value="UniProtKB"/>
</dbReference>
<dbReference type="GO" id="GO:0042803">
    <property type="term" value="F:protein homodimerization activity"/>
    <property type="evidence" value="ECO:0000314"/>
    <property type="project" value="UniProtKB"/>
</dbReference>
<dbReference type="GO" id="GO:0009060">
    <property type="term" value="P:aerobic respiration"/>
    <property type="evidence" value="ECO:0007669"/>
    <property type="project" value="Ensembl"/>
</dbReference>
<dbReference type="GO" id="GO:0061692">
    <property type="term" value="P:cellular detoxification of hydrogen peroxide"/>
    <property type="evidence" value="ECO:0000314"/>
    <property type="project" value="ComplexPortal"/>
</dbReference>
<dbReference type="GO" id="GO:0071363">
    <property type="term" value="P:cellular response to growth factor stimulus"/>
    <property type="evidence" value="ECO:0007669"/>
    <property type="project" value="Ensembl"/>
</dbReference>
<dbReference type="GO" id="GO:0008203">
    <property type="term" value="P:cholesterol metabolic process"/>
    <property type="evidence" value="ECO:0007669"/>
    <property type="project" value="Ensembl"/>
</dbReference>
<dbReference type="GO" id="GO:0020027">
    <property type="term" value="P:hemoglobin metabolic process"/>
    <property type="evidence" value="ECO:0007669"/>
    <property type="project" value="Ensembl"/>
</dbReference>
<dbReference type="GO" id="GO:0042744">
    <property type="term" value="P:hydrogen peroxide catabolic process"/>
    <property type="evidence" value="ECO:0000314"/>
    <property type="project" value="UniProtKB"/>
</dbReference>
<dbReference type="GO" id="GO:0043066">
    <property type="term" value="P:negative regulation of apoptotic process"/>
    <property type="evidence" value="ECO:0000315"/>
    <property type="project" value="UniProtKB"/>
</dbReference>
<dbReference type="GO" id="GO:0001649">
    <property type="term" value="P:osteoblast differentiation"/>
    <property type="evidence" value="ECO:0007005"/>
    <property type="project" value="UniProtKB"/>
</dbReference>
<dbReference type="GO" id="GO:0051781">
    <property type="term" value="P:positive regulation of cell division"/>
    <property type="evidence" value="ECO:0007669"/>
    <property type="project" value="UniProtKB-KW"/>
</dbReference>
<dbReference type="GO" id="GO:0051897">
    <property type="term" value="P:positive regulation of phosphatidylinositol 3-kinase/protein kinase B signal transduction"/>
    <property type="evidence" value="ECO:0007669"/>
    <property type="project" value="Ensembl"/>
</dbReference>
<dbReference type="GO" id="GO:0014823">
    <property type="term" value="P:response to activity"/>
    <property type="evidence" value="ECO:0007669"/>
    <property type="project" value="Ensembl"/>
</dbReference>
<dbReference type="GO" id="GO:0072722">
    <property type="term" value="P:response to amitrole"/>
    <property type="evidence" value="ECO:0007669"/>
    <property type="project" value="Ensembl"/>
</dbReference>
<dbReference type="GO" id="GO:0046686">
    <property type="term" value="P:response to cadmium ion"/>
    <property type="evidence" value="ECO:0007669"/>
    <property type="project" value="Ensembl"/>
</dbReference>
<dbReference type="GO" id="GO:0032355">
    <property type="term" value="P:response to estradiol"/>
    <property type="evidence" value="ECO:0007669"/>
    <property type="project" value="Ensembl"/>
</dbReference>
<dbReference type="GO" id="GO:0045471">
    <property type="term" value="P:response to ethanol"/>
    <property type="evidence" value="ECO:0007669"/>
    <property type="project" value="Ensembl"/>
</dbReference>
<dbReference type="GO" id="GO:0070542">
    <property type="term" value="P:response to fatty acid"/>
    <property type="evidence" value="ECO:0007669"/>
    <property type="project" value="Ensembl"/>
</dbReference>
<dbReference type="GO" id="GO:0042542">
    <property type="term" value="P:response to hydrogen peroxide"/>
    <property type="evidence" value="ECO:0000318"/>
    <property type="project" value="GO_Central"/>
</dbReference>
<dbReference type="GO" id="GO:0055093">
    <property type="term" value="P:response to hyperoxia"/>
    <property type="evidence" value="ECO:0007669"/>
    <property type="project" value="Ensembl"/>
</dbReference>
<dbReference type="GO" id="GO:0001666">
    <property type="term" value="P:response to hypoxia"/>
    <property type="evidence" value="ECO:0007669"/>
    <property type="project" value="Ensembl"/>
</dbReference>
<dbReference type="GO" id="GO:0014854">
    <property type="term" value="P:response to inactivity"/>
    <property type="evidence" value="ECO:0007669"/>
    <property type="project" value="Ensembl"/>
</dbReference>
<dbReference type="GO" id="GO:0032868">
    <property type="term" value="P:response to insulin"/>
    <property type="evidence" value="ECO:0007669"/>
    <property type="project" value="Ensembl"/>
</dbReference>
<dbReference type="GO" id="GO:0033591">
    <property type="term" value="P:response to L-ascorbic acid"/>
    <property type="evidence" value="ECO:0007669"/>
    <property type="project" value="Ensembl"/>
</dbReference>
<dbReference type="GO" id="GO:0010288">
    <property type="term" value="P:response to lead ion"/>
    <property type="evidence" value="ECO:0007669"/>
    <property type="project" value="Ensembl"/>
</dbReference>
<dbReference type="GO" id="GO:0009642">
    <property type="term" value="P:response to light intensity"/>
    <property type="evidence" value="ECO:0007669"/>
    <property type="project" value="Ensembl"/>
</dbReference>
<dbReference type="GO" id="GO:0010193">
    <property type="term" value="P:response to ozone"/>
    <property type="evidence" value="ECO:0007669"/>
    <property type="project" value="Ensembl"/>
</dbReference>
<dbReference type="GO" id="GO:0080184">
    <property type="term" value="P:response to phenylpropanoid"/>
    <property type="evidence" value="ECO:0007669"/>
    <property type="project" value="Ensembl"/>
</dbReference>
<dbReference type="GO" id="GO:0000302">
    <property type="term" value="P:response to reactive oxygen species"/>
    <property type="evidence" value="ECO:0000315"/>
    <property type="project" value="UniProtKB"/>
</dbReference>
<dbReference type="GO" id="GO:0033189">
    <property type="term" value="P:response to vitamin A"/>
    <property type="evidence" value="ECO:0007669"/>
    <property type="project" value="Ensembl"/>
</dbReference>
<dbReference type="GO" id="GO:0033197">
    <property type="term" value="P:response to vitamin E"/>
    <property type="evidence" value="ECO:0007669"/>
    <property type="project" value="Ensembl"/>
</dbReference>
<dbReference type="GO" id="GO:0009410">
    <property type="term" value="P:response to xenobiotic stimulus"/>
    <property type="evidence" value="ECO:0007669"/>
    <property type="project" value="Ensembl"/>
</dbReference>
<dbReference type="GO" id="GO:0006641">
    <property type="term" value="P:triglyceride metabolic process"/>
    <property type="evidence" value="ECO:0007669"/>
    <property type="project" value="Ensembl"/>
</dbReference>
<dbReference type="GO" id="GO:0001657">
    <property type="term" value="P:ureteric bud development"/>
    <property type="evidence" value="ECO:0007669"/>
    <property type="project" value="Ensembl"/>
</dbReference>
<dbReference type="GO" id="GO:0009650">
    <property type="term" value="P:UV protection"/>
    <property type="evidence" value="ECO:0000315"/>
    <property type="project" value="UniProtKB"/>
</dbReference>
<dbReference type="CDD" id="cd08156">
    <property type="entry name" value="catalase_clade_3"/>
    <property type="match status" value="1"/>
</dbReference>
<dbReference type="FunFam" id="2.40.180.10:FF:000001">
    <property type="entry name" value="Catalase"/>
    <property type="match status" value="1"/>
</dbReference>
<dbReference type="Gene3D" id="2.40.180.10">
    <property type="entry name" value="Catalase core domain"/>
    <property type="match status" value="1"/>
</dbReference>
<dbReference type="InterPro" id="IPR018028">
    <property type="entry name" value="Catalase"/>
</dbReference>
<dbReference type="InterPro" id="IPR040333">
    <property type="entry name" value="Catalase_3"/>
</dbReference>
<dbReference type="InterPro" id="IPR024708">
    <property type="entry name" value="Catalase_AS"/>
</dbReference>
<dbReference type="InterPro" id="IPR024711">
    <property type="entry name" value="Catalase_clade1/3"/>
</dbReference>
<dbReference type="InterPro" id="IPR011614">
    <property type="entry name" value="Catalase_core"/>
</dbReference>
<dbReference type="InterPro" id="IPR002226">
    <property type="entry name" value="Catalase_haem_BS"/>
</dbReference>
<dbReference type="InterPro" id="IPR010582">
    <property type="entry name" value="Catalase_immune_responsive"/>
</dbReference>
<dbReference type="InterPro" id="IPR020835">
    <property type="entry name" value="Catalase_sf"/>
</dbReference>
<dbReference type="PANTHER" id="PTHR11465">
    <property type="entry name" value="CATALASE"/>
    <property type="match status" value="1"/>
</dbReference>
<dbReference type="PANTHER" id="PTHR11465:SF9">
    <property type="entry name" value="CATALASE"/>
    <property type="match status" value="1"/>
</dbReference>
<dbReference type="Pfam" id="PF00199">
    <property type="entry name" value="Catalase"/>
    <property type="match status" value="1"/>
</dbReference>
<dbReference type="Pfam" id="PF06628">
    <property type="entry name" value="Catalase-rel"/>
    <property type="match status" value="1"/>
</dbReference>
<dbReference type="PIRSF" id="PIRSF038928">
    <property type="entry name" value="Catalase_clade1-3"/>
    <property type="match status" value="1"/>
</dbReference>
<dbReference type="PRINTS" id="PR00067">
    <property type="entry name" value="CATALASE"/>
</dbReference>
<dbReference type="SMART" id="SM01060">
    <property type="entry name" value="Catalase"/>
    <property type="match status" value="1"/>
</dbReference>
<dbReference type="SUPFAM" id="SSF56634">
    <property type="entry name" value="Heme-dependent catalase-like"/>
    <property type="match status" value="1"/>
</dbReference>
<dbReference type="PROSITE" id="PS00437">
    <property type="entry name" value="CATALASE_1"/>
    <property type="match status" value="1"/>
</dbReference>
<dbReference type="PROSITE" id="PS00438">
    <property type="entry name" value="CATALASE_2"/>
    <property type="match status" value="1"/>
</dbReference>
<dbReference type="PROSITE" id="PS51402">
    <property type="entry name" value="CATALASE_3"/>
    <property type="match status" value="1"/>
</dbReference>
<evidence type="ECO:0000250" key="1">
    <source>
        <dbReference type="UniProtKB" id="P24270"/>
    </source>
</evidence>
<evidence type="ECO:0000255" key="2">
    <source>
        <dbReference type="PROSITE-ProRule" id="PRU10013"/>
    </source>
</evidence>
<evidence type="ECO:0000269" key="3">
    <source>
    </source>
</evidence>
<evidence type="ECO:0000269" key="4">
    <source>
    </source>
</evidence>
<evidence type="ECO:0000269" key="5">
    <source>
    </source>
</evidence>
<evidence type="ECO:0000269" key="6">
    <source>
    </source>
</evidence>
<evidence type="ECO:0000269" key="7">
    <source>
    </source>
</evidence>
<evidence type="ECO:0000269" key="8">
    <source>
    </source>
</evidence>
<evidence type="ECO:0000269" key="9">
    <source>
    </source>
</evidence>
<evidence type="ECO:0000305" key="10"/>
<evidence type="ECO:0000305" key="11">
    <source>
    </source>
</evidence>
<evidence type="ECO:0007744" key="12">
    <source>
        <dbReference type="PDB" id="1DGB"/>
    </source>
</evidence>
<evidence type="ECO:0007744" key="13">
    <source>
        <dbReference type="PDB" id="1DGF"/>
    </source>
</evidence>
<evidence type="ECO:0007744" key="14">
    <source>
        <dbReference type="PDB" id="1DGG"/>
    </source>
</evidence>
<evidence type="ECO:0007744" key="15">
    <source>
        <dbReference type="PDB" id="1DGH"/>
    </source>
</evidence>
<evidence type="ECO:0007744" key="16">
    <source>
        <dbReference type="PDB" id="1F4J"/>
    </source>
</evidence>
<evidence type="ECO:0007744" key="17">
    <source>
        <dbReference type="PDB" id="1QQW"/>
    </source>
</evidence>
<evidence type="ECO:0007744" key="18">
    <source>
    </source>
</evidence>
<evidence type="ECO:0007744" key="19">
    <source>
    </source>
</evidence>
<evidence type="ECO:0007744" key="20">
    <source>
    </source>
</evidence>
<evidence type="ECO:0007829" key="21">
    <source>
        <dbReference type="PDB" id="1DGF"/>
    </source>
</evidence>
<evidence type="ECO:0007829" key="22">
    <source>
        <dbReference type="PDB" id="1F4J"/>
    </source>
</evidence>
<evidence type="ECO:0007829" key="23">
    <source>
        <dbReference type="PDB" id="1QQW"/>
    </source>
</evidence>
<evidence type="ECO:0007829" key="24">
    <source>
        <dbReference type="PDB" id="7VD9"/>
    </source>
</evidence>
<comment type="function">
    <text evidence="8">Catalyzes the degradation of hydrogen peroxide (H(2)O(2)) generated by peroxisomal oxidases to water and oxygen, thereby protecting cells from the toxic effects of hydrogen peroxide (PubMed:7882369). Promotes growth of cells including T-cells, B-cells, myeloid leukemia cells, melanoma cells, mastocytoma cells and normal and transformed fibroblast cells (PubMed:7882369).</text>
</comment>
<comment type="catalytic activity">
    <reaction evidence="2 8">
        <text>2 H2O2 = O2 + 2 H2O</text>
        <dbReference type="Rhea" id="RHEA:20309"/>
        <dbReference type="ChEBI" id="CHEBI:15377"/>
        <dbReference type="ChEBI" id="CHEBI:15379"/>
        <dbReference type="ChEBI" id="CHEBI:16240"/>
        <dbReference type="EC" id="1.11.1.6"/>
    </reaction>
</comment>
<comment type="cofactor">
    <cofactor evidence="3 4">
        <name>heme</name>
        <dbReference type="ChEBI" id="CHEBI:30413"/>
    </cofactor>
</comment>
<comment type="cofactor">
    <cofactor evidence="3">
        <name>NADP(+)</name>
        <dbReference type="ChEBI" id="CHEBI:58349"/>
    </cofactor>
</comment>
<comment type="subunit">
    <text evidence="3 4 6">Homotetramer (PubMed:10656833, PubMed:10666617, PubMed:21976670). Interacts (via microbody targeting signal) with PEX5, monomeric form interacts with PEX5, leading to its translocation into peroxisomes (PubMed:21976670).</text>
</comment>
<comment type="interaction">
    <interactant intactId="EBI-2432181">
        <id>P04040</id>
    </interactant>
    <interactant intactId="EBI-2432181">
        <id>P04040</id>
        <label>CAT</label>
    </interactant>
    <organismsDiffer>false</organismsDiffer>
    <experiments>5</experiments>
</comment>
<comment type="subcellular location">
    <subcellularLocation>
        <location evidence="6 9">Peroxisome matrix</location>
    </subcellularLocation>
</comment>
<comment type="disease" evidence="7">
    <disease id="DI-00016">
        <name>Acatalasemia</name>
        <acronym>ACATLAS</acronym>
        <description>A metabolic disorder characterized by a total or near total loss of catalase activity in red cells. It is often associated with ulcerating oral lesions. Acatalasemia is inherited as an autosomal recessive trait.</description>
        <dbReference type="MIM" id="614097"/>
    </disease>
    <text>The disease is caused by variants affecting the gene represented in this entry.</text>
</comment>
<comment type="similarity">
    <text evidence="10">Belongs to the catalase family.</text>
</comment>
<comment type="online information" name="Wikipedia">
    <link uri="https://en.wikipedia.org/wiki/Catalase"/>
    <text>Catalase entry</text>
</comment>
<keyword id="KW-0002">3D-structure</keyword>
<keyword id="KW-0007">Acetylation</keyword>
<keyword id="KW-0903">Direct protein sequencing</keyword>
<keyword id="KW-0349">Heme</keyword>
<keyword id="KW-0376">Hydrogen peroxide</keyword>
<keyword id="KW-0408">Iron</keyword>
<keyword id="KW-0479">Metal-binding</keyword>
<keyword id="KW-0497">Mitogen</keyword>
<keyword id="KW-0521">NADP</keyword>
<keyword id="KW-0560">Oxidoreductase</keyword>
<keyword id="KW-0575">Peroxidase</keyword>
<keyword id="KW-0576">Peroxisome</keyword>
<keyword id="KW-0597">Phosphoprotein</keyword>
<keyword id="KW-1267">Proteomics identification</keyword>
<keyword id="KW-1185">Reference proteome</keyword>
<reference key="1">
    <citation type="journal article" date="1986" name="Nucleic Acids Res.">
        <title>Isolation and characterization of the human catalase gene.</title>
        <authorList>
            <person name="Quan F."/>
            <person name="Korneluk R.G."/>
            <person name="Tropak M.B."/>
            <person name="Gravel R.A."/>
        </authorList>
    </citation>
    <scope>NUCLEOTIDE SEQUENCE [GENOMIC DNA]</scope>
</reference>
<reference key="2">
    <citation type="journal article" date="1986" name="Nucleic Acids Res.">
        <title>cDNA sequence coding for human kidney catalase.</title>
        <authorList>
            <person name="Bell G.I."/>
            <person name="Najarian R.C."/>
            <person name="Mullenbach G.T."/>
            <person name="Hallewell R.A."/>
        </authorList>
    </citation>
    <scope>NUCLEOTIDE SEQUENCE [MRNA]</scope>
    <source>
        <tissue>Kidney</tissue>
    </source>
</reference>
<reference key="3">
    <citation type="journal article" date="2001" name="Free Radic. Biol. Med.">
        <title>Transduction of human catalase mediated by an HIV-1 TAT protein basic domain and arginine-rich peptides into mammalian cells.</title>
        <authorList>
            <person name="Jin L.H."/>
            <person name="Bahn J.H."/>
            <person name="Eum W.S."/>
            <person name="Kwon H.Y."/>
            <person name="Jang S.H."/>
            <person name="Han K.H."/>
            <person name="Kang T.-C."/>
            <person name="Won M.H."/>
            <person name="Kang J.H."/>
            <person name="Cho S.-W."/>
            <person name="Park J."/>
            <person name="Choi S.Y."/>
        </authorList>
    </citation>
    <scope>NUCLEOTIDE SEQUENCE [MRNA]</scope>
    <source>
        <tissue>Liver</tissue>
    </source>
</reference>
<reference key="4">
    <citation type="journal article" date="2004" name="Nat. Genet.">
        <title>Complete sequencing and characterization of 21,243 full-length human cDNAs.</title>
        <authorList>
            <person name="Ota T."/>
            <person name="Suzuki Y."/>
            <person name="Nishikawa T."/>
            <person name="Otsuki T."/>
            <person name="Sugiyama T."/>
            <person name="Irie R."/>
            <person name="Wakamatsu A."/>
            <person name="Hayashi K."/>
            <person name="Sato H."/>
            <person name="Nagai K."/>
            <person name="Kimura K."/>
            <person name="Makita H."/>
            <person name="Sekine M."/>
            <person name="Obayashi M."/>
            <person name="Nishi T."/>
            <person name="Shibahara T."/>
            <person name="Tanaka T."/>
            <person name="Ishii S."/>
            <person name="Yamamoto J."/>
            <person name="Saito K."/>
            <person name="Kawai Y."/>
            <person name="Isono Y."/>
            <person name="Nakamura Y."/>
            <person name="Nagahari K."/>
            <person name="Murakami K."/>
            <person name="Yasuda T."/>
            <person name="Iwayanagi T."/>
            <person name="Wagatsuma M."/>
            <person name="Shiratori A."/>
            <person name="Sudo H."/>
            <person name="Hosoiri T."/>
            <person name="Kaku Y."/>
            <person name="Kodaira H."/>
            <person name="Kondo H."/>
            <person name="Sugawara M."/>
            <person name="Takahashi M."/>
            <person name="Kanda K."/>
            <person name="Yokoi T."/>
            <person name="Furuya T."/>
            <person name="Kikkawa E."/>
            <person name="Omura Y."/>
            <person name="Abe K."/>
            <person name="Kamihara K."/>
            <person name="Katsuta N."/>
            <person name="Sato K."/>
            <person name="Tanikawa M."/>
            <person name="Yamazaki M."/>
            <person name="Ninomiya K."/>
            <person name="Ishibashi T."/>
            <person name="Yamashita H."/>
            <person name="Murakawa K."/>
            <person name="Fujimori K."/>
            <person name="Tanai H."/>
            <person name="Kimata M."/>
            <person name="Watanabe M."/>
            <person name="Hiraoka S."/>
            <person name="Chiba Y."/>
            <person name="Ishida S."/>
            <person name="Ono Y."/>
            <person name="Takiguchi S."/>
            <person name="Watanabe S."/>
            <person name="Yosida M."/>
            <person name="Hotuta T."/>
            <person name="Kusano J."/>
            <person name="Kanehori K."/>
            <person name="Takahashi-Fujii A."/>
            <person name="Hara H."/>
            <person name="Tanase T.-O."/>
            <person name="Nomura Y."/>
            <person name="Togiya S."/>
            <person name="Komai F."/>
            <person name="Hara R."/>
            <person name="Takeuchi K."/>
            <person name="Arita M."/>
            <person name="Imose N."/>
            <person name="Musashino K."/>
            <person name="Yuuki H."/>
            <person name="Oshima A."/>
            <person name="Sasaki N."/>
            <person name="Aotsuka S."/>
            <person name="Yoshikawa Y."/>
            <person name="Matsunawa H."/>
            <person name="Ichihara T."/>
            <person name="Shiohata N."/>
            <person name="Sano S."/>
            <person name="Moriya S."/>
            <person name="Momiyama H."/>
            <person name="Satoh N."/>
            <person name="Takami S."/>
            <person name="Terashima Y."/>
            <person name="Suzuki O."/>
            <person name="Nakagawa S."/>
            <person name="Senoh A."/>
            <person name="Mizoguchi H."/>
            <person name="Goto Y."/>
            <person name="Shimizu F."/>
            <person name="Wakebe H."/>
            <person name="Hishigaki H."/>
            <person name="Watanabe T."/>
            <person name="Sugiyama A."/>
            <person name="Takemoto M."/>
            <person name="Kawakami B."/>
            <person name="Yamazaki M."/>
            <person name="Watanabe K."/>
            <person name="Kumagai A."/>
            <person name="Itakura S."/>
            <person name="Fukuzumi Y."/>
            <person name="Fujimori Y."/>
            <person name="Komiyama M."/>
            <person name="Tashiro H."/>
            <person name="Tanigami A."/>
            <person name="Fujiwara T."/>
            <person name="Ono T."/>
            <person name="Yamada K."/>
            <person name="Fujii Y."/>
            <person name="Ozaki K."/>
            <person name="Hirao M."/>
            <person name="Ohmori Y."/>
            <person name="Kawabata A."/>
            <person name="Hikiji T."/>
            <person name="Kobatake N."/>
            <person name="Inagaki H."/>
            <person name="Ikema Y."/>
            <person name="Okamoto S."/>
            <person name="Okitani R."/>
            <person name="Kawakami T."/>
            <person name="Noguchi S."/>
            <person name="Itoh T."/>
            <person name="Shigeta K."/>
            <person name="Senba T."/>
            <person name="Matsumura K."/>
            <person name="Nakajima Y."/>
            <person name="Mizuno T."/>
            <person name="Morinaga M."/>
            <person name="Sasaki M."/>
            <person name="Togashi T."/>
            <person name="Oyama M."/>
            <person name="Hata H."/>
            <person name="Watanabe M."/>
            <person name="Komatsu T."/>
            <person name="Mizushima-Sugano J."/>
            <person name="Satoh T."/>
            <person name="Shirai Y."/>
            <person name="Takahashi Y."/>
            <person name="Nakagawa K."/>
            <person name="Okumura K."/>
            <person name="Nagase T."/>
            <person name="Nomura N."/>
            <person name="Kikuchi H."/>
            <person name="Masuho Y."/>
            <person name="Yamashita R."/>
            <person name="Nakai K."/>
            <person name="Yada T."/>
            <person name="Nakamura Y."/>
            <person name="Ohara O."/>
            <person name="Isogai T."/>
            <person name="Sugano S."/>
        </authorList>
    </citation>
    <scope>NUCLEOTIDE SEQUENCE [LARGE SCALE MRNA]</scope>
    <source>
        <tissue>Placenta</tissue>
        <tissue>Uterus</tissue>
    </source>
</reference>
<reference key="5">
    <citation type="submission" date="2004-02" db="EMBL/GenBank/DDBJ databases">
        <authorList>
            <consortium name="SeattleSNPs variation discovery resource"/>
        </authorList>
    </citation>
    <scope>NUCLEOTIDE SEQUENCE [GENOMIC DNA]</scope>
</reference>
<reference key="6">
    <citation type="journal article" date="2006" name="Nature">
        <title>Human chromosome 11 DNA sequence and analysis including novel gene identification.</title>
        <authorList>
            <person name="Taylor T.D."/>
            <person name="Noguchi H."/>
            <person name="Totoki Y."/>
            <person name="Toyoda A."/>
            <person name="Kuroki Y."/>
            <person name="Dewar K."/>
            <person name="Lloyd C."/>
            <person name="Itoh T."/>
            <person name="Takeda T."/>
            <person name="Kim D.-W."/>
            <person name="She X."/>
            <person name="Barlow K.F."/>
            <person name="Bloom T."/>
            <person name="Bruford E."/>
            <person name="Chang J.L."/>
            <person name="Cuomo C.A."/>
            <person name="Eichler E."/>
            <person name="FitzGerald M.G."/>
            <person name="Jaffe D.B."/>
            <person name="LaButti K."/>
            <person name="Nicol R."/>
            <person name="Park H.-S."/>
            <person name="Seaman C."/>
            <person name="Sougnez C."/>
            <person name="Yang X."/>
            <person name="Zimmer A.R."/>
            <person name="Zody M.C."/>
            <person name="Birren B.W."/>
            <person name="Nusbaum C."/>
            <person name="Fujiyama A."/>
            <person name="Hattori M."/>
            <person name="Rogers J."/>
            <person name="Lander E.S."/>
            <person name="Sakaki Y."/>
        </authorList>
    </citation>
    <scope>NUCLEOTIDE SEQUENCE [LARGE SCALE GENOMIC DNA]</scope>
</reference>
<reference key="7">
    <citation type="submission" date="2005-09" db="EMBL/GenBank/DDBJ databases">
        <authorList>
            <person name="Mural R.J."/>
            <person name="Istrail S."/>
            <person name="Sutton G.G."/>
            <person name="Florea L."/>
            <person name="Halpern A.L."/>
            <person name="Mobarry C.M."/>
            <person name="Lippert R."/>
            <person name="Walenz B."/>
            <person name="Shatkay H."/>
            <person name="Dew I."/>
            <person name="Miller J.R."/>
            <person name="Flanigan M.J."/>
            <person name="Edwards N.J."/>
            <person name="Bolanos R."/>
            <person name="Fasulo D."/>
            <person name="Halldorsson B.V."/>
            <person name="Hannenhalli S."/>
            <person name="Turner R."/>
            <person name="Yooseph S."/>
            <person name="Lu F."/>
            <person name="Nusskern D.R."/>
            <person name="Shue B.C."/>
            <person name="Zheng X.H."/>
            <person name="Zhong F."/>
            <person name="Delcher A.L."/>
            <person name="Huson D.H."/>
            <person name="Kravitz S.A."/>
            <person name="Mouchard L."/>
            <person name="Reinert K."/>
            <person name="Remington K.A."/>
            <person name="Clark A.G."/>
            <person name="Waterman M.S."/>
            <person name="Eichler E.E."/>
            <person name="Adams M.D."/>
            <person name="Hunkapiller M.W."/>
            <person name="Myers E.W."/>
            <person name="Venter J.C."/>
        </authorList>
    </citation>
    <scope>NUCLEOTIDE SEQUENCE [LARGE SCALE GENOMIC DNA]</scope>
</reference>
<reference key="8">
    <citation type="journal article" date="2004" name="Genome Res.">
        <title>The status, quality, and expansion of the NIH full-length cDNA project: the Mammalian Gene Collection (MGC).</title>
        <authorList>
            <consortium name="The MGC Project Team"/>
        </authorList>
    </citation>
    <scope>NUCLEOTIDE SEQUENCE [LARGE SCALE MRNA]</scope>
    <source>
        <tissue>Eye</tissue>
    </source>
</reference>
<reference key="9">
    <citation type="journal article" date="1994" name="J. Clin. Invest.">
        <title>Vulnerability of the human airway epithelium to hyperoxia. Constitutive expression of the catalase gene in human bronchial epithelial cells despite oxidant stress.</title>
        <authorList>
            <person name="Yoo J.-H."/>
            <person name="Erzurum S.C."/>
            <person name="Hay J.G."/>
            <person name="Lemarchand P."/>
            <person name="Crystal R.G."/>
        </authorList>
    </citation>
    <scope>NUCLEOTIDE SEQUENCE [GENOMIC DNA] OF 1-22</scope>
</reference>
<reference key="10">
    <citation type="journal article" date="2003" name="Nat. Biotechnol.">
        <title>Exploring proteomes and analyzing protein processing by mass spectrometric identification of sorted N-terminal peptides.</title>
        <authorList>
            <person name="Gevaert K."/>
            <person name="Goethals M."/>
            <person name="Martens L."/>
            <person name="Van Damme J."/>
            <person name="Staes A."/>
            <person name="Thomas G.R."/>
            <person name="Vandekerckhove J."/>
        </authorList>
    </citation>
    <scope>PROTEIN SEQUENCE OF 2-19</scope>
    <source>
        <tissue>Platelet</tissue>
    </source>
</reference>
<reference key="11">
    <citation type="journal article" date="1995" name="Cancer Res.">
        <title>A human erythrocyte-derived growth-promoting factor with a wide target cell spectrum: identification as catalase.</title>
        <authorList>
            <person name="Takeuchi A."/>
            <person name="Miyamoto T."/>
            <person name="Yamaji K."/>
            <person name="Masuho Y."/>
            <person name="Hayashi M."/>
            <person name="Hayashi H."/>
            <person name="Onozaki K."/>
        </authorList>
    </citation>
    <scope>PROTEIN SEQUENCE OF 24-38; 99-105; 307-315 AND 469-476</scope>
    <scope>FUNCTION</scope>
    <scope>CATALYTIC ACTIVITY</scope>
    <source>
        <tissue>Erythrocyte</tissue>
    </source>
</reference>
<reference key="12">
    <citation type="journal article" date="1984" name="J. Biol. Chem.">
        <title>Isolation of human fibroblast catalase cDNA clones. Sequence of clones derived from spliced and unspliced mRNA.</title>
        <authorList>
            <person name="Korneluk R.G."/>
            <person name="Quan F."/>
            <person name="Lewis W.H."/>
            <person name="Guise K.S."/>
            <person name="Willard H.F."/>
            <person name="Holmes M.T."/>
            <person name="Gravel R.A."/>
        </authorList>
    </citation>
    <scope>NUCLEOTIDE SEQUENCE [GENOMIC DNA] OF 77-527</scope>
    <source>
        <tissue>Fibroblast</tissue>
    </source>
</reference>
<reference key="13">
    <citation type="submission" date="2007-03" db="UniProtKB">
        <authorList>
            <person name="Lubec G."/>
            <person name="Vishwanath V."/>
        </authorList>
    </citation>
    <scope>PROTEIN SEQUENCE OF 445-456</scope>
    <scope>IDENTIFICATION BY MASS SPECTROMETRY</scope>
    <source>
        <tissue>Brain</tissue>
        <tissue>Cajal-Retzius cell</tissue>
    </source>
</reference>
<reference key="14">
    <citation type="journal article" date="1990" name="J. Mol. Biol.">
        <title>Molecular analysis of human acatalasemia. Identification of a splicing mutation.</title>
        <authorList>
            <person name="Wen J.K."/>
            <person name="Osumi T."/>
            <person name="Hashimoto T."/>
            <person name="Ogata M."/>
        </authorList>
    </citation>
    <scope>INVOLVEMENT IN ACATLAS</scope>
</reference>
<reference key="15">
    <citation type="journal article" date="1996" name="J. Cell Biol.">
        <title>Targeting of human catalase to peroxisomes is dependent upon a novel COOH-terminal peroxisomal targeting sequence.</title>
        <authorList>
            <person name="Purdue P.E."/>
            <person name="Lazarow P.B."/>
        </authorList>
    </citation>
    <scope>SUBCELLULAR LOCATION</scope>
    <scope>MICROBODY TARGETING SIGNAL</scope>
    <scope>MUTAGENESIS OF 517-SER--LEU-519; 524-LYS--LEU-527 AND ASN-526</scope>
</reference>
<reference key="16">
    <citation type="journal article" date="2008" name="J. Proteome Res.">
        <title>Phosphoproteome of resting human platelets.</title>
        <authorList>
            <person name="Zahedi R.P."/>
            <person name="Lewandrowski U."/>
            <person name="Wiesner J."/>
            <person name="Wortelkamp S."/>
            <person name="Moebius J."/>
            <person name="Schuetz C."/>
            <person name="Walter U."/>
            <person name="Gambaryan S."/>
            <person name="Sickmann A."/>
        </authorList>
    </citation>
    <scope>IDENTIFICATION BY MASS SPECTROMETRY [LARGE SCALE ANALYSIS]</scope>
    <source>
        <tissue>Platelet</tissue>
    </source>
</reference>
<reference key="17">
    <citation type="journal article" date="2009" name="Science">
        <title>Lysine acetylation targets protein complexes and co-regulates major cellular functions.</title>
        <authorList>
            <person name="Choudhary C."/>
            <person name="Kumar C."/>
            <person name="Gnad F."/>
            <person name="Nielsen M.L."/>
            <person name="Rehman M."/>
            <person name="Walther T.C."/>
            <person name="Olsen J.V."/>
            <person name="Mann M."/>
        </authorList>
    </citation>
    <scope>IDENTIFICATION BY MASS SPECTROMETRY [LARGE SCALE ANALYSIS]</scope>
</reference>
<reference key="18">
    <citation type="journal article" date="2011" name="BMC Syst. Biol.">
        <title>Initial characterization of the human central proteome.</title>
        <authorList>
            <person name="Burkard T.R."/>
            <person name="Planyavsky M."/>
            <person name="Kaupe I."/>
            <person name="Breitwieser F.P."/>
            <person name="Buerckstuemmer T."/>
            <person name="Bennett K.L."/>
            <person name="Superti-Furga G."/>
            <person name="Colinge J."/>
        </authorList>
    </citation>
    <scope>IDENTIFICATION BY MASS SPECTROMETRY [LARGE SCALE ANALYSIS]</scope>
</reference>
<reference key="19">
    <citation type="journal article" date="2011" name="J. Biol. Chem.">
        <title>PEX5 protein binds monomeric catalase blocking its tetramerization and releases it upon binding the N-terminal domain of PEX14.</title>
        <authorList>
            <person name="Freitas M.O."/>
            <person name="Francisco T."/>
            <person name="Rodrigues T.A."/>
            <person name="Alencastre I.S."/>
            <person name="Pinto M.P."/>
            <person name="Grou C.P."/>
            <person name="Carvalho A.F."/>
            <person name="Fransen M."/>
            <person name="Sa-Miranda C."/>
            <person name="Azevedo J.E."/>
        </authorList>
    </citation>
    <scope>SUBUNIT</scope>
    <scope>SUBCELLULAR LOCATION</scope>
    <scope>INTERACTION WITH PEX5</scope>
</reference>
<reference key="20">
    <citation type="journal article" date="2013" name="J. Proteome Res.">
        <title>Toward a comprehensive characterization of a human cancer cell phosphoproteome.</title>
        <authorList>
            <person name="Zhou H."/>
            <person name="Di Palma S."/>
            <person name="Preisinger C."/>
            <person name="Peng M."/>
            <person name="Polat A.N."/>
            <person name="Heck A.J."/>
            <person name="Mohammed S."/>
        </authorList>
    </citation>
    <scope>PHOSPHORYLATION [LARGE SCALE ANALYSIS] AT SER-515</scope>
    <scope>IDENTIFICATION BY MASS SPECTROMETRY [LARGE SCALE ANALYSIS]</scope>
    <source>
        <tissue>Cervix carcinoma</tissue>
        <tissue>Erythroleukemia</tissue>
    </source>
</reference>
<reference key="21">
    <citation type="journal article" date="2014" name="J. Proteomics">
        <title>An enzyme assisted RP-RPLC approach for in-depth analysis of human liver phosphoproteome.</title>
        <authorList>
            <person name="Bian Y."/>
            <person name="Song C."/>
            <person name="Cheng K."/>
            <person name="Dong M."/>
            <person name="Wang F."/>
            <person name="Huang J."/>
            <person name="Sun D."/>
            <person name="Wang L."/>
            <person name="Ye M."/>
            <person name="Zou H."/>
        </authorList>
    </citation>
    <scope>PHOSPHORYLATION [LARGE SCALE ANALYSIS] AT SER-9; SER-422; THR-511; SER-515 AND SER-517</scope>
    <scope>IDENTIFICATION BY MASS SPECTROMETRY [LARGE SCALE ANALYSIS]</scope>
    <source>
        <tissue>Liver</tissue>
    </source>
</reference>
<reference key="22">
    <citation type="journal article" date="2015" name="Proteomics">
        <title>N-terminome analysis of the human mitochondrial proteome.</title>
        <authorList>
            <person name="Vaca Jacome A.S."/>
            <person name="Rabilloud T."/>
            <person name="Schaeffer-Reiss C."/>
            <person name="Rompais M."/>
            <person name="Ayoub D."/>
            <person name="Lane L."/>
            <person name="Bairoch A."/>
            <person name="Van Dorsselaer A."/>
            <person name="Carapito C."/>
        </authorList>
    </citation>
    <scope>ACETYLATION [LARGE SCALE ANALYSIS] AT ALA-2</scope>
    <scope>CLEAVAGE OF INITIATOR METHIONINE [LARGE SCALE ANALYSIS]</scope>
    <scope>IDENTIFICATION BY MASS SPECTROMETRY [LARGE SCALE ANALYSIS]</scope>
</reference>
<reference key="23">
    <citation type="journal article" date="2000" name="Acta Crystallogr. D">
        <title>Structure of human erythrocyte catalase.</title>
        <authorList>
            <person name="Ko T.P."/>
            <person name="Safo M.K."/>
            <person name="Musayev F.N."/>
            <person name="Di Salvo M.L."/>
            <person name="Wang C."/>
            <person name="Wu S.H."/>
            <person name="Abraham D.J."/>
        </authorList>
    </citation>
    <scope>X-RAY CRYSTALLOGRAPHY (2.75 ANGSTROMS) IN COMPLEX WITH HEME</scope>
    <scope>COFACTOR</scope>
    <scope>SUBUNIT</scope>
</reference>
<reference key="24">
    <citation type="journal article" date="2000" name="J. Mol. Biol.">
        <title>Active and inhibited human catalase structures: ligand and NADPH binding and catalytic mechanism.</title>
        <authorList>
            <person name="Putnam C.D."/>
            <person name="Arvai A.S."/>
            <person name="Bourne Y."/>
            <person name="Tainer J.A."/>
        </authorList>
    </citation>
    <scope>X-RAY CRYSTALLOGRAPHY (1.5 ANGSTROMS) IN COMPLEX WITH HEME AND NADPH</scope>
    <scope>COFACTOR</scope>
    <scope>SUBUNIT</scope>
    <scope>ACTIVE SITES</scope>
</reference>
<reference key="25">
    <citation type="journal article" date="2001" name="Acta Crystallogr. D">
        <title>Structure of tetragonal crystals of human erythrocyte catalase.</title>
        <authorList>
            <person name="Safo M.K."/>
            <person name="Musayev F.N."/>
            <person name="Wu S.H."/>
            <person name="Abraham D.J."/>
            <person name="Ko T.P."/>
        </authorList>
    </citation>
    <scope>X-RAY CRYSTALLOGRAPHY (2.4 ANGSTROMS)</scope>
</reference>
<accession>P04040</accession>
<accession>A8K6C0</accession>
<accession>B2RCZ9</accession>
<accession>D3DR07</accession>
<accession>Q2M1U4</accession>
<accession>Q4VXX5</accession>
<accession>Q9BWT9</accession>
<accession>Q9UC85</accession>
<protein>
    <recommendedName>
        <fullName>Catalase</fullName>
        <ecNumber evidence="8">1.11.1.6</ecNumber>
    </recommendedName>
</protein>
<organism>
    <name type="scientific">Homo sapiens</name>
    <name type="common">Human</name>
    <dbReference type="NCBI Taxonomy" id="9606"/>
    <lineage>
        <taxon>Eukaryota</taxon>
        <taxon>Metazoa</taxon>
        <taxon>Chordata</taxon>
        <taxon>Craniata</taxon>
        <taxon>Vertebrata</taxon>
        <taxon>Euteleostomi</taxon>
        <taxon>Mammalia</taxon>
        <taxon>Eutheria</taxon>
        <taxon>Euarchontoglires</taxon>
        <taxon>Primates</taxon>
        <taxon>Haplorrhini</taxon>
        <taxon>Catarrhini</taxon>
        <taxon>Hominidae</taxon>
        <taxon>Homo</taxon>
    </lineage>
</organism>
<gene>
    <name type="primary">CAT</name>
</gene>
<name>CATA_HUMAN</name>